<feature type="chain" id="PRO_0000260651" description="1,4-alpha-glucan branching enzyme GlgB">
    <location>
        <begin position="1"/>
        <end position="632"/>
    </location>
</feature>
<feature type="active site" description="Nucleophile" evidence="1">
    <location>
        <position position="310"/>
    </location>
</feature>
<feature type="active site" description="Proton donor" evidence="1">
    <location>
        <position position="363"/>
    </location>
</feature>
<evidence type="ECO:0000255" key="1">
    <source>
        <dbReference type="HAMAP-Rule" id="MF_00685"/>
    </source>
</evidence>
<gene>
    <name evidence="1" type="primary">glgB</name>
    <name type="ordered locus">DSY2040</name>
</gene>
<comment type="function">
    <text evidence="1">Catalyzes the formation of the alpha-1,6-glucosidic linkages in glycogen by scission of a 1,4-alpha-linked oligosaccharide from growing alpha-1,4-glucan chains and the subsequent attachment of the oligosaccharide to the alpha-1,6 position.</text>
</comment>
<comment type="catalytic activity">
    <reaction evidence="1">
        <text>Transfers a segment of a (1-&gt;4)-alpha-D-glucan chain to a primary hydroxy group in a similar glucan chain.</text>
        <dbReference type="EC" id="2.4.1.18"/>
    </reaction>
</comment>
<comment type="pathway">
    <text evidence="1">Glycan biosynthesis; glycogen biosynthesis.</text>
</comment>
<comment type="subunit">
    <text evidence="1">Monomer.</text>
</comment>
<comment type="similarity">
    <text evidence="1">Belongs to the glycosyl hydrolase 13 family. GlgB subfamily.</text>
</comment>
<reference key="1">
    <citation type="journal article" date="2006" name="J. Bacteriol.">
        <title>Complete genome sequence of the dehalorespiring bacterium Desulfitobacterium hafniense Y51 and comparison with Dehalococcoides ethenogenes 195.</title>
        <authorList>
            <person name="Nonaka H."/>
            <person name="Keresztes G."/>
            <person name="Shinoda Y."/>
            <person name="Ikenaga Y."/>
            <person name="Abe M."/>
            <person name="Naito K."/>
            <person name="Inatomi K."/>
            <person name="Furukawa K."/>
            <person name="Inui M."/>
            <person name="Yukawa H."/>
        </authorList>
    </citation>
    <scope>NUCLEOTIDE SEQUENCE [LARGE SCALE GENOMIC DNA]</scope>
    <source>
        <strain>Y51</strain>
    </source>
</reference>
<organism>
    <name type="scientific">Desulfitobacterium hafniense (strain Y51)</name>
    <dbReference type="NCBI Taxonomy" id="138119"/>
    <lineage>
        <taxon>Bacteria</taxon>
        <taxon>Bacillati</taxon>
        <taxon>Bacillota</taxon>
        <taxon>Clostridia</taxon>
        <taxon>Eubacteriales</taxon>
        <taxon>Desulfitobacteriaceae</taxon>
        <taxon>Desulfitobacterium</taxon>
    </lineage>
</organism>
<name>GLGB_DESHY</name>
<sequence>MQSKIQKDSPLLTQEEMYLFNCGEFYYSYRKFGAHFLEHKGRWGTYFAVWAPQARQVSVVGDFNGWCGMNHSLQKWEEQGIWTLFIPGLPTGEIYKYEILTSSGESVLKADPYAFFSEVRPHTASVIYSLEDYSWGDQAWLAQRKTRNPKVLPLSSYEIHLGSWRRTEDGRFLNYAQLVTVLIPYVKSLGYTHIEILPLMEHPYDGSWGYQITGFYACTSRYGTPHDLMYLIDQCHQAGIGVILDWVPGHFCMDAHGLGKFDGSPLYEREVHEQWGTYKFDYSRSEVRSFLISNAVFWLDVFHVDGLRVDGVSSMLYLDYGKAKGAWQPNRYGGRENLEAVGFIKQLNATLHGLYPDALLIAEEATDWQGVTGPLDQEGLGFTFKWNMGWMNDTLRYIGLDFPERRSFHQLLTFPMMYAYAESYILPLSHDEVVHGKKSLLDKMPGDYGQKFAGLRGLTTYFMTSPGKKLLFMGGEIPQFIEWREDRELDWFLMDYEMHRKYHGFVQQLNGLYLREKALWEIDGDWTGFEWIDVHNHEQGVIVFCRKGKSFQDRLVVLINFQPYNYERYRIGVEMAKGYREILNTDSTDFGGWGMTNPGLLKVEGVPWHGREFSLEIRVPALGAMILKPELA</sequence>
<dbReference type="EC" id="2.4.1.18" evidence="1"/>
<dbReference type="EMBL" id="AP008230">
    <property type="protein sequence ID" value="BAE83829.1"/>
    <property type="molecule type" value="Genomic_DNA"/>
</dbReference>
<dbReference type="SMR" id="Q24VW3"/>
<dbReference type="STRING" id="138119.DSY2040"/>
<dbReference type="CAZy" id="CBM48">
    <property type="family name" value="Carbohydrate-Binding Module Family 48"/>
</dbReference>
<dbReference type="CAZy" id="GH13">
    <property type="family name" value="Glycoside Hydrolase Family 13"/>
</dbReference>
<dbReference type="KEGG" id="dsy:DSY2040"/>
<dbReference type="eggNOG" id="COG0296">
    <property type="taxonomic scope" value="Bacteria"/>
</dbReference>
<dbReference type="HOGENOM" id="CLU_004245_3_2_9"/>
<dbReference type="UniPathway" id="UPA00164"/>
<dbReference type="Proteomes" id="UP000001946">
    <property type="component" value="Chromosome"/>
</dbReference>
<dbReference type="GO" id="GO:0005829">
    <property type="term" value="C:cytosol"/>
    <property type="evidence" value="ECO:0007669"/>
    <property type="project" value="TreeGrafter"/>
</dbReference>
<dbReference type="GO" id="GO:0003844">
    <property type="term" value="F:1,4-alpha-glucan branching enzyme activity"/>
    <property type="evidence" value="ECO:0007669"/>
    <property type="project" value="UniProtKB-UniRule"/>
</dbReference>
<dbReference type="GO" id="GO:0043169">
    <property type="term" value="F:cation binding"/>
    <property type="evidence" value="ECO:0007669"/>
    <property type="project" value="InterPro"/>
</dbReference>
<dbReference type="GO" id="GO:0004553">
    <property type="term" value="F:hydrolase activity, hydrolyzing O-glycosyl compounds"/>
    <property type="evidence" value="ECO:0007669"/>
    <property type="project" value="InterPro"/>
</dbReference>
<dbReference type="GO" id="GO:0005978">
    <property type="term" value="P:glycogen biosynthetic process"/>
    <property type="evidence" value="ECO:0007669"/>
    <property type="project" value="UniProtKB-UniRule"/>
</dbReference>
<dbReference type="CDD" id="cd11322">
    <property type="entry name" value="AmyAc_Glg_BE"/>
    <property type="match status" value="1"/>
</dbReference>
<dbReference type="CDD" id="cd02855">
    <property type="entry name" value="E_set_GBE_prok_N"/>
    <property type="match status" value="1"/>
</dbReference>
<dbReference type="FunFam" id="2.60.40.10:FF:000169">
    <property type="entry name" value="1,4-alpha-glucan branching enzyme GlgB"/>
    <property type="match status" value="1"/>
</dbReference>
<dbReference type="FunFam" id="2.60.40.1180:FF:000002">
    <property type="entry name" value="1,4-alpha-glucan branching enzyme GlgB"/>
    <property type="match status" value="1"/>
</dbReference>
<dbReference type="FunFam" id="3.20.20.80:FF:000003">
    <property type="entry name" value="1,4-alpha-glucan branching enzyme GlgB"/>
    <property type="match status" value="1"/>
</dbReference>
<dbReference type="Gene3D" id="3.20.20.80">
    <property type="entry name" value="Glycosidases"/>
    <property type="match status" value="1"/>
</dbReference>
<dbReference type="Gene3D" id="2.60.40.1180">
    <property type="entry name" value="Golgi alpha-mannosidase II"/>
    <property type="match status" value="1"/>
</dbReference>
<dbReference type="Gene3D" id="2.60.40.10">
    <property type="entry name" value="Immunoglobulins"/>
    <property type="match status" value="1"/>
</dbReference>
<dbReference type="HAMAP" id="MF_00685">
    <property type="entry name" value="GlgB"/>
    <property type="match status" value="1"/>
</dbReference>
<dbReference type="InterPro" id="IPR006048">
    <property type="entry name" value="A-amylase/branching_C"/>
</dbReference>
<dbReference type="InterPro" id="IPR037439">
    <property type="entry name" value="Branching_enzy"/>
</dbReference>
<dbReference type="InterPro" id="IPR006407">
    <property type="entry name" value="GlgB"/>
</dbReference>
<dbReference type="InterPro" id="IPR044143">
    <property type="entry name" value="GlgB_N_E_set_prok"/>
</dbReference>
<dbReference type="InterPro" id="IPR006047">
    <property type="entry name" value="Glyco_hydro_13_cat_dom"/>
</dbReference>
<dbReference type="InterPro" id="IPR004193">
    <property type="entry name" value="Glyco_hydro_13_N"/>
</dbReference>
<dbReference type="InterPro" id="IPR013780">
    <property type="entry name" value="Glyco_hydro_b"/>
</dbReference>
<dbReference type="InterPro" id="IPR017853">
    <property type="entry name" value="Glycoside_hydrolase_SF"/>
</dbReference>
<dbReference type="InterPro" id="IPR013783">
    <property type="entry name" value="Ig-like_fold"/>
</dbReference>
<dbReference type="InterPro" id="IPR014756">
    <property type="entry name" value="Ig_E-set"/>
</dbReference>
<dbReference type="NCBIfam" id="TIGR01515">
    <property type="entry name" value="branching_enzym"/>
    <property type="match status" value="1"/>
</dbReference>
<dbReference type="NCBIfam" id="NF003811">
    <property type="entry name" value="PRK05402.1"/>
    <property type="match status" value="1"/>
</dbReference>
<dbReference type="NCBIfam" id="NF008967">
    <property type="entry name" value="PRK12313.1"/>
    <property type="match status" value="1"/>
</dbReference>
<dbReference type="PANTHER" id="PTHR43651">
    <property type="entry name" value="1,4-ALPHA-GLUCAN-BRANCHING ENZYME"/>
    <property type="match status" value="1"/>
</dbReference>
<dbReference type="PANTHER" id="PTHR43651:SF3">
    <property type="entry name" value="1,4-ALPHA-GLUCAN-BRANCHING ENZYME"/>
    <property type="match status" value="1"/>
</dbReference>
<dbReference type="Pfam" id="PF00128">
    <property type="entry name" value="Alpha-amylase"/>
    <property type="match status" value="1"/>
</dbReference>
<dbReference type="Pfam" id="PF02806">
    <property type="entry name" value="Alpha-amylase_C"/>
    <property type="match status" value="1"/>
</dbReference>
<dbReference type="Pfam" id="PF02922">
    <property type="entry name" value="CBM_48"/>
    <property type="match status" value="1"/>
</dbReference>
<dbReference type="PIRSF" id="PIRSF000463">
    <property type="entry name" value="GlgB"/>
    <property type="match status" value="1"/>
</dbReference>
<dbReference type="SMART" id="SM00642">
    <property type="entry name" value="Aamy"/>
    <property type="match status" value="1"/>
</dbReference>
<dbReference type="SUPFAM" id="SSF51445">
    <property type="entry name" value="(Trans)glycosidases"/>
    <property type="match status" value="1"/>
</dbReference>
<dbReference type="SUPFAM" id="SSF81296">
    <property type="entry name" value="E set domains"/>
    <property type="match status" value="1"/>
</dbReference>
<dbReference type="SUPFAM" id="SSF51011">
    <property type="entry name" value="Glycosyl hydrolase domain"/>
    <property type="match status" value="1"/>
</dbReference>
<proteinExistence type="inferred from homology"/>
<protein>
    <recommendedName>
        <fullName evidence="1">1,4-alpha-glucan branching enzyme GlgB</fullName>
        <ecNumber evidence="1">2.4.1.18</ecNumber>
    </recommendedName>
    <alternativeName>
        <fullName evidence="1">1,4-alpha-D-glucan:1,4-alpha-D-glucan 6-glucosyl-transferase</fullName>
    </alternativeName>
    <alternativeName>
        <fullName evidence="1">Alpha-(1-&gt;4)-glucan branching enzyme</fullName>
    </alternativeName>
    <alternativeName>
        <fullName evidence="1">Glycogen branching enzyme</fullName>
        <shortName evidence="1">BE</shortName>
    </alternativeName>
</protein>
<accession>Q24VW3</accession>
<keyword id="KW-0119">Carbohydrate metabolism</keyword>
<keyword id="KW-0320">Glycogen biosynthesis</keyword>
<keyword id="KW-0321">Glycogen metabolism</keyword>
<keyword id="KW-0328">Glycosyltransferase</keyword>
<keyword id="KW-1185">Reference proteome</keyword>
<keyword id="KW-0808">Transferase</keyword>